<proteinExistence type="evidence at protein level"/>
<protein>
    <recommendedName>
        <fullName>Thrombin-like enzyme albolabrase</fullName>
        <shortName>SVTLE albolabrase</shortName>
        <ecNumber>3.4.21.-</ecNumber>
    </recommendedName>
    <alternativeName>
        <fullName>Fibrinogen-clotting enzyme</fullName>
    </alternativeName>
    <alternativeName>
        <fullName>Snake venom serine protease</fullName>
        <shortName>SVSP</shortName>
    </alternativeName>
</protein>
<feature type="chain" id="PRO_0000416385" description="Thrombin-like enzyme albolabrase">
    <location>
        <begin position="1"/>
        <end position="11" status="greater than"/>
    </location>
</feature>
<feature type="disulfide bond" evidence="2">
    <location>
        <begin position="7"/>
        <end status="unknown"/>
    </location>
</feature>
<feature type="non-terminal residue">
    <location>
        <position position="11"/>
    </location>
</feature>
<evidence type="ECO:0000250" key="1"/>
<evidence type="ECO:0000255" key="2">
    <source>
        <dbReference type="PROSITE-ProRule" id="PRU00274"/>
    </source>
</evidence>
<evidence type="ECO:0000269" key="3">
    <source>
    </source>
</evidence>
<evidence type="ECO:0000305" key="4"/>
<sequence>VVGGDECNINE</sequence>
<keyword id="KW-1204">Blood coagulation cascade activating toxin</keyword>
<keyword id="KW-0903">Direct protein sequencing</keyword>
<keyword id="KW-1015">Disulfide bond</keyword>
<keyword id="KW-0325">Glycoprotein</keyword>
<keyword id="KW-1199">Hemostasis impairing toxin</keyword>
<keyword id="KW-0378">Hydrolase</keyword>
<keyword id="KW-0645">Protease</keyword>
<keyword id="KW-0964">Secreted</keyword>
<keyword id="KW-0720">Serine protease</keyword>
<keyword id="KW-0800">Toxin</keyword>
<comment type="function">
    <text evidence="3">Thrombin-like snake venom serine protease. Releases both fibrinopeptides A and B after 90 minutes incubation, but only fibrinopeptides A after 10 minutes incubation. Clots fibrinogen with different clotting time depending on the species: bovine &gt; dog = human &gt; goat. Fails to clot both rabbit and cat fibrinogens.</text>
</comment>
<comment type="biophysicochemical properties">
    <kinetics>
        <KM evidence="3">0.11 mM for N-benzoyl-L-Pro-L-Phe-L-Arg p-nitroanilide</KM>
        <KM evidence="3">0.13 mM for N-benzoyl-L-Phe-L-Val-L-Arg p-nitroanilide</KM>
        <KM evidence="3">0.31 mM for N-benzoyl-L-Val-L-Gly-L-Arg p-nitroanilide</KM>
        <KM evidence="3">0.35 mM for N-p-tosyl-Gly-L-Pro-L-Lys p-nitroanilide</KM>
        <KM evidence="3">0.61 mM for N-alpha-benzoyl-L-arginine ethyl ester (BAEE)</KM>
    </kinetics>
</comment>
<comment type="subunit">
    <text evidence="3">Monomer.</text>
</comment>
<comment type="subcellular location">
    <subcellularLocation>
        <location>Secreted</location>
    </subcellularLocation>
</comment>
<comment type="tissue specificity">
    <text>Expressed by the venom gland.</text>
</comment>
<comment type="PTM">
    <text evidence="1">Glycosylated.</text>
</comment>
<comment type="similarity">
    <text evidence="4">Belongs to the peptidase S1 family. Snake venom subfamily.</text>
</comment>
<dbReference type="EC" id="3.4.21.-"/>
<dbReference type="SABIO-RK" id="P0DJF4"/>
<dbReference type="GO" id="GO:0005576">
    <property type="term" value="C:extracellular region"/>
    <property type="evidence" value="ECO:0007669"/>
    <property type="project" value="UniProtKB-SubCell"/>
</dbReference>
<dbReference type="GO" id="GO:0008236">
    <property type="term" value="F:serine-type peptidase activity"/>
    <property type="evidence" value="ECO:0007669"/>
    <property type="project" value="UniProtKB-KW"/>
</dbReference>
<dbReference type="GO" id="GO:0090729">
    <property type="term" value="F:toxin activity"/>
    <property type="evidence" value="ECO:0007669"/>
    <property type="project" value="UniProtKB-KW"/>
</dbReference>
<dbReference type="GO" id="GO:0006508">
    <property type="term" value="P:proteolysis"/>
    <property type="evidence" value="ECO:0007669"/>
    <property type="project" value="UniProtKB-KW"/>
</dbReference>
<name>VSPAL_TRIAB</name>
<reference key="1">
    <citation type="journal article" date="2012" name="Comp. Biochem. Physiol.">
        <title>Isolation and characterization of the thrombin-like enzyme from Cryptelytrops albolabris (white-lipped tree viper) venom.</title>
        <authorList>
            <person name="Tan N.H."/>
            <person name="Fung S.Y."/>
            <person name="Yap Y.H."/>
        </authorList>
    </citation>
    <scope>PROTEIN SEQUENCE</scope>
    <scope>FUNCTION</scope>
    <scope>BIOPHYSICOCHEMICAL PROPERTIES</scope>
    <scope>SUBUNIT</scope>
    <source>
        <tissue>Venom</tissue>
    </source>
</reference>
<organism>
    <name type="scientific">Trimeresurus albolabris</name>
    <name type="common">White-lipped pit viper</name>
    <name type="synonym">Cryptelytrops albolabris</name>
    <dbReference type="NCBI Taxonomy" id="8765"/>
    <lineage>
        <taxon>Eukaryota</taxon>
        <taxon>Metazoa</taxon>
        <taxon>Chordata</taxon>
        <taxon>Craniata</taxon>
        <taxon>Vertebrata</taxon>
        <taxon>Euteleostomi</taxon>
        <taxon>Lepidosauria</taxon>
        <taxon>Squamata</taxon>
        <taxon>Bifurcata</taxon>
        <taxon>Unidentata</taxon>
        <taxon>Episquamata</taxon>
        <taxon>Toxicofera</taxon>
        <taxon>Serpentes</taxon>
        <taxon>Colubroidea</taxon>
        <taxon>Viperidae</taxon>
        <taxon>Crotalinae</taxon>
        <taxon>Trimeresurus</taxon>
    </lineage>
</organism>
<accession>P0DJF4</accession>